<sequence length="2521" mass="274036">MENSYDDQSIAVIGLSCRFPGDADNVERFWNLLREGQSAISTVPGNRWNSRRFQDDKNHSQNTSRTNRAHFLKEDVSAFDANFFSISKSEAVSMDPQQRLMLEVSYEAFENAGLAVESLAQSQMGCWVSSFSQDWREMQFSDLQSVPKYAMSGMQPEMLANRVSYFFDLHGPSMALETACSGSLVGLHVACQSLRSGECDAALVGGANLFLNPNMFLALSNQNFLAPDGLSKAFDASANGYGRGEGFAAVILKPVEKAIRDGDPIRAVIRATGTNQDGRTKGLTMPNGDAQETLIRSTYRSAGLELKDTAYFEAHGTGTQVGDFEELSAIARTVADARKREGLEELWVGSAKTNIGHLEATAGLAGVLKAILVLENGVIPPNLHFKNPNPRIPFQEYHIRVPTQEVTWNPDTIRRVSVNSFGFGGSNAHAIIDNGKQYLHQRRSKATLVNGTHAADDKELKPEVPQIFVINSSDQEGLGRQRSALRHYLANFGKEGRANSGWFRDLAFTLGKKRCRLPWRSFCTASTVLELSEALEATDFPKIRSGTAALRLAYVFTGQGAQWAQMGLELFQFPTFKQSVVAADSHLKKLGCPWSVVEELQRSGAESNIHVSWYSQTLCTVLQVALVELLQSWGITPRSVVGHSSGEMAAAFAIGALAREDAWKIAYWRGKLSSELTERAPDLSGAMMAVGASHEQAQKWVEGLTRGKCVVACINSPSSVTVSGDDAGLDELAAMLKEKEVFARKLKVTTAYHSHHMKVVAEAYHDVLKDVEVRNVPTDGPQMFTSVSETLVNPSDLDASHWVANLVSPVLFSNTVAELARAKTPKDQATGSAVDLMLEIGPHAALRGPVTQILQAKGLRNVEYQSLLSRGCNAIQTTLAAVADLICRGVTADIDAVNNAHTPQGAGHKTMPANTLTTLPPYAWNHSRTFWTESRMLREAKAVNDSPSSFIGLPMPSFVANEHIWRGFLRLEHVPWVRHHKMQSAVLFPAGGFLAMAIEGASQFQGKDNSRVAKGYKLRDVRIDSAVILTEESNIEHILQLRPHDTARSQQTDSYDGWWEFKISTSAGSDESLKCNCYGLVTVEFEQLIHPSHASKASSTTVQQAEAFYERLESVGLEYGPSFQAIKTILHSSGGQTEGEIEIMDIDVNSTTPGGSDGRPYVVHPTTLEALFQMAYAAFDNQSDGVKKALLVTDIEELLLDASISHTPGARLQTSARSSRLGFREMLADVTVSPTASNAGGISVRGLTCVEMPSTAGVNSDVGITGREGYDSMLSKFVWKPALNLLSATEREHLLIAATKVTDAETEAILAREAADFQNVKSALQASQRGKTGSLKLRNALKWISQELPDAKVFGKALENVSQDGQGAGPTGPIVDVLSGTSTPDVLLSGYGSTEKFLAALPGVKVSLQKMYQLVSIMAHENPDLAVLEIGSGSSGEEDTSIFSTTDIPTTIKYTRAVATPEILRNLQEFSPPAGPIPRFTVLDLEQDLADQGIDLASFDIIIGNNVLSNSRNVENVLRRTKSLLRDEGNMCFVELTKPSSRAVPVLGVVCDWWKRGDDGLRRPLSSDSIKDILTEQGFTLDFLSPDFVDPAIQQSSLVFASSSAENLPTASATDDADDEEIYILISPELKSPDAVVQNVASSFQHSQIVTWGAGVDFKGKYIISLLELYDPFINHLTEEDFDILKKLVTQASSLLWVTGIPEPHASTILGFARVVRFEIPSLDFRVLTLDPATIEDAKKNSIHISQVQRSKSPDKEYKELDSIVHIPRVTVDASLNHQISNLCLSEAIESKPLGSLERPQKLCIRNPGMLNTLCFQADNVSENELQDDEVEVRVMASGLNSKDVMVALGHITDTHLGLEASGVVLRVGASVTHLQLGDKVVMLANGAHRTTLRGKAAVCQKIPQDMTYEEAAGFPFAYCTAYYTLLHVLRAQSGQSVLIHAAAGAVGQALVRLAQHLGLEVFTTAESADDRAFVQELLGLFPDRIYHPQDKGLVQHVMRITGDVGVDFIVNPLSVEEIADSLNCLADFGTFVEMGMENDSRHSTLNTRLFRRDTTFVAVNLQRVLELRPKLIGEILQKALGLFQDGQVKSVSPSNVYPVSEAEAAIQMFQDNRHHGKITLSYSSEDFVSVLQNPKDSLKLSPDNTYLIAGGLGGIGRSLATLLVDCGARHIAMVSRSGVTSVEQQQLIDNLSERGAKIGVYKCSIGDANALGRALTQCASEMPPIKGIIHSAVVFRDAVLHNMTYKQWDELLDGKLRGSWNLHALTTSYNLDFFLCIGSFMAIIGGISQSNYAAGSAFQDGLAHLRQSQGLPAVTIDLGIVKGFGAVEEQGAVGHTLEWREPFGVSEPEVHALIKGALLGQRGNWALDVPAQMINSIPTGGMVRSSGVSQPYYFDDPRFSIMAKIGMDSENSDTQASVSLKELLADAESSDDAVLFVTGAVISKVAKLMQVAEEEIDTGKSLHAYGVDSLVAVEYVSWAKKEVSADITVFDVMASKPIMSFARDLVGKGKWGAAIPACKS</sequence>
<protein>
    <recommendedName>
        <fullName evidence="7">Partially reducing polyketide synthase tpeA</fullName>
        <shortName evidence="7">R-PKS tpeA</shortName>
        <ecNumber evidence="8">2.3.1.-</ecNumber>
    </recommendedName>
    <alternativeName>
        <fullName evidence="7">Polyesters biosynthesis cluster protein A</fullName>
    </alternativeName>
</protein>
<keyword id="KW-0012">Acyltransferase</keyword>
<keyword id="KW-0511">Multifunctional enzyme</keyword>
<keyword id="KW-0560">Oxidoreductase</keyword>
<keyword id="KW-0596">Phosphopantetheine</keyword>
<keyword id="KW-0597">Phosphoprotein</keyword>
<keyword id="KW-1185">Reference proteome</keyword>
<keyword id="KW-0808">Transferase</keyword>
<reference key="1">
    <citation type="journal article" date="2015" name="Genome Announc.">
        <title>Genome sequence of the AIDS-associated pathogen Penicillium marneffei (ATCC18224) and its near taxonomic relative Talaromyces stipitatus (ATCC10500).</title>
        <authorList>
            <person name="Nierman W.C."/>
            <person name="Fedorova-Abrams N.D."/>
            <person name="Andrianopoulos A."/>
        </authorList>
    </citation>
    <scope>NUCLEOTIDE SEQUENCE [LARGE SCALE GENOMIC DNA]</scope>
    <source>
        <strain>ATCC 10500 / CBS 375.48 / QM 6759 / NRRL 1006</strain>
    </source>
</reference>
<reference key="2">
    <citation type="journal article" date="2022" name="Molecules">
        <title>Putative Biosynthesis of Talarodioxadione &amp; Talarooxime from Talaromyces stipitatus.</title>
        <authorList>
            <person name="Al Fahad A.J."/>
        </authorList>
    </citation>
    <scope>FUNCTION</scope>
    <scope>DOMAIN</scope>
</reference>
<organism>
    <name type="scientific">Talaromyces stipitatus (strain ATCC 10500 / CBS 375.48 / QM 6759 / NRRL 1006)</name>
    <name type="common">Penicillium stipitatum</name>
    <dbReference type="NCBI Taxonomy" id="441959"/>
    <lineage>
        <taxon>Eukaryota</taxon>
        <taxon>Fungi</taxon>
        <taxon>Dikarya</taxon>
        <taxon>Ascomycota</taxon>
        <taxon>Pezizomycotina</taxon>
        <taxon>Eurotiomycetes</taxon>
        <taxon>Eurotiomycetidae</taxon>
        <taxon>Eurotiales</taxon>
        <taxon>Trichocomaceae</taxon>
        <taxon>Talaromyces</taxon>
        <taxon>Talaromyces sect. Talaromyces</taxon>
    </lineage>
</organism>
<comment type="function">
    <text evidence="6 8">Partially reducing polyketide synthase; part of the gene cluster that mediates the biosynthesis of polyesters containing 2,4-dihydroxy-6-(2-hydroxypropyl)benzoate and 3-hydroxybutyrate moieties, such as talapolyester G, 15G256beta and 15G256beta-2; as well as to oxidized derivatives such as 15G256alpha (PubMed:35889347). The biosynthesis of the polyesters probably starts with the formation of the diketide 3-hydroxybutyryl-S-ACP catalyzed by the partially reducing polyketide synthase tpeA (Probable). The acceptance of 3-hydroxybutyryl by the non-reducing polyketide synthase tpeB would initiate further elongation and cyclization, catalyzed by KS and PT, respectively, to form 2,4-dihydroxy-6-(2-hydroxyn-propyl)benzoyl-S-ACP intermediate (Probable). The TE domain could catalyze lactonization at this step to yield 6-hydroxymellein as a derailment product (Probable). The polyesterification process maybe occurs when additional molecules of 3-hydroxybutyryl are transferred to tpeB (Probable). Following the first esterification step, an intramolecular cyclization catalyzed by the TE domain of tpeB would give talarodioxadione 1, whereas the ethyl esterification of talapolyester G perhaps happens spontaneously (Probable). Further oxidation by the cytochrome P450 monooxygenase tpeC then leads to the formation of oxidized derivatives (Probable).</text>
</comment>
<comment type="cofactor">
    <cofactor evidence="2">
        <name>pantetheine 4'-phosphate</name>
        <dbReference type="ChEBI" id="CHEBI:47942"/>
    </cofactor>
</comment>
<comment type="pathway">
    <text evidence="6">Secondary metabolite biosynthesis.</text>
</comment>
<comment type="domain">
    <text evidence="6 8">Multidomain protein; including a ketosynthase (KS) that catalyzes repeated decarboxylative condensation to elongate the polyketide backbone; a malonyl-CoA:ACP transacylase (MAT) that selects and transfers the extender unit malonyl-CoA; a dehydratase (DH) domain that reduces hydroxyl groups to enoyl groups; an enoylreductase (ER) domain that reduces enoyl groups to alkyl group; a ketoreductase (KR) domain that catalyzes beta-ketoreduction steps; and an acyl-carrier protein (ACP) that serves as the tether of the growing and completed polyketide via its phosphopantetheinyl arm (Probable). The DH and ER domains of tpeA lack key residues and are non-functional (PubMed:35889347).</text>
</comment>
<evidence type="ECO:0000255" key="1"/>
<evidence type="ECO:0000255" key="2">
    <source>
        <dbReference type="PROSITE-ProRule" id="PRU00258"/>
    </source>
</evidence>
<evidence type="ECO:0000255" key="3">
    <source>
        <dbReference type="PROSITE-ProRule" id="PRU01348"/>
    </source>
</evidence>
<evidence type="ECO:0000255" key="4">
    <source>
        <dbReference type="PROSITE-ProRule" id="PRU01363"/>
    </source>
</evidence>
<evidence type="ECO:0000256" key="5">
    <source>
        <dbReference type="SAM" id="MobiDB-lite"/>
    </source>
</evidence>
<evidence type="ECO:0000269" key="6">
    <source>
    </source>
</evidence>
<evidence type="ECO:0000303" key="7">
    <source>
    </source>
</evidence>
<evidence type="ECO:0000305" key="8">
    <source>
    </source>
</evidence>
<gene>
    <name evidence="7" type="primary">tpeA</name>
    <name type="ORF">TSTA_008130</name>
</gene>
<proteinExistence type="inferred from homology"/>
<accession>B8MV59</accession>
<dbReference type="EC" id="2.3.1.-" evidence="8"/>
<dbReference type="EMBL" id="EQ962662">
    <property type="protein sequence ID" value="EED11515.1"/>
    <property type="molecule type" value="Genomic_DNA"/>
</dbReference>
<dbReference type="RefSeq" id="XP_002488696.1">
    <property type="nucleotide sequence ID" value="XM_002488651.1"/>
</dbReference>
<dbReference type="SMR" id="B8MV59"/>
<dbReference type="STRING" id="441959.B8MV59"/>
<dbReference type="GeneID" id="8110150"/>
<dbReference type="VEuPathDB" id="FungiDB:TSTA_008130"/>
<dbReference type="eggNOG" id="KOG1202">
    <property type="taxonomic scope" value="Eukaryota"/>
</dbReference>
<dbReference type="HOGENOM" id="CLU_000022_31_0_1"/>
<dbReference type="InParanoid" id="B8MV59"/>
<dbReference type="OMA" id="SQPICSV"/>
<dbReference type="OrthoDB" id="329835at2759"/>
<dbReference type="PhylomeDB" id="B8MV59"/>
<dbReference type="Proteomes" id="UP000001745">
    <property type="component" value="Unassembled WGS sequence"/>
</dbReference>
<dbReference type="GO" id="GO:0004312">
    <property type="term" value="F:fatty acid synthase activity"/>
    <property type="evidence" value="ECO:0007669"/>
    <property type="project" value="TreeGrafter"/>
</dbReference>
<dbReference type="GO" id="GO:0050637">
    <property type="term" value="F:lovastatin nonaketide synthase activity"/>
    <property type="evidence" value="ECO:0007669"/>
    <property type="project" value="UniProtKB-EC"/>
</dbReference>
<dbReference type="GO" id="GO:0016491">
    <property type="term" value="F:oxidoreductase activity"/>
    <property type="evidence" value="ECO:0007669"/>
    <property type="project" value="UniProtKB-KW"/>
</dbReference>
<dbReference type="GO" id="GO:0031177">
    <property type="term" value="F:phosphopantetheine binding"/>
    <property type="evidence" value="ECO:0007669"/>
    <property type="project" value="InterPro"/>
</dbReference>
<dbReference type="GO" id="GO:0006633">
    <property type="term" value="P:fatty acid biosynthetic process"/>
    <property type="evidence" value="ECO:0007669"/>
    <property type="project" value="TreeGrafter"/>
</dbReference>
<dbReference type="GO" id="GO:0044550">
    <property type="term" value="P:secondary metabolite biosynthetic process"/>
    <property type="evidence" value="ECO:0007669"/>
    <property type="project" value="UniProtKB-ARBA"/>
</dbReference>
<dbReference type="CDD" id="cd05195">
    <property type="entry name" value="enoyl_red"/>
    <property type="match status" value="1"/>
</dbReference>
<dbReference type="CDD" id="cd00833">
    <property type="entry name" value="PKS"/>
    <property type="match status" value="1"/>
</dbReference>
<dbReference type="FunFam" id="3.40.47.10:FF:000019">
    <property type="entry name" value="Polyketide synthase type I"/>
    <property type="match status" value="1"/>
</dbReference>
<dbReference type="Gene3D" id="3.40.47.10">
    <property type="match status" value="1"/>
</dbReference>
<dbReference type="Gene3D" id="1.10.1200.10">
    <property type="entry name" value="ACP-like"/>
    <property type="match status" value="1"/>
</dbReference>
<dbReference type="Gene3D" id="3.40.366.10">
    <property type="entry name" value="Malonyl-Coenzyme A Acyl Carrier Protein, domain 2"/>
    <property type="match status" value="1"/>
</dbReference>
<dbReference type="Gene3D" id="3.90.180.10">
    <property type="entry name" value="Medium-chain alcohol dehydrogenases, catalytic domain"/>
    <property type="match status" value="1"/>
</dbReference>
<dbReference type="Gene3D" id="3.40.50.720">
    <property type="entry name" value="NAD(P)-binding Rossmann-like Domain"/>
    <property type="match status" value="2"/>
</dbReference>
<dbReference type="Gene3D" id="3.10.129.110">
    <property type="entry name" value="Polyketide synthase dehydratase"/>
    <property type="match status" value="1"/>
</dbReference>
<dbReference type="Gene3D" id="3.40.50.150">
    <property type="entry name" value="Vaccinia Virus protein VP39"/>
    <property type="match status" value="1"/>
</dbReference>
<dbReference type="InterPro" id="IPR001227">
    <property type="entry name" value="Ac_transferase_dom_sf"/>
</dbReference>
<dbReference type="InterPro" id="IPR036736">
    <property type="entry name" value="ACP-like_sf"/>
</dbReference>
<dbReference type="InterPro" id="IPR014043">
    <property type="entry name" value="Acyl_transferase_dom"/>
</dbReference>
<dbReference type="InterPro" id="IPR016035">
    <property type="entry name" value="Acyl_Trfase/lysoPLipase"/>
</dbReference>
<dbReference type="InterPro" id="IPR013154">
    <property type="entry name" value="ADH-like_N"/>
</dbReference>
<dbReference type="InterPro" id="IPR011032">
    <property type="entry name" value="GroES-like_sf"/>
</dbReference>
<dbReference type="InterPro" id="IPR014031">
    <property type="entry name" value="Ketoacyl_synth_C"/>
</dbReference>
<dbReference type="InterPro" id="IPR014030">
    <property type="entry name" value="Ketoacyl_synth_N"/>
</dbReference>
<dbReference type="InterPro" id="IPR016036">
    <property type="entry name" value="Malonyl_transacylase_ACP-bd"/>
</dbReference>
<dbReference type="InterPro" id="IPR036291">
    <property type="entry name" value="NAD(P)-bd_dom_sf"/>
</dbReference>
<dbReference type="InterPro" id="IPR056501">
    <property type="entry name" value="NAD-bd_HRPKS_sdrA"/>
</dbReference>
<dbReference type="InterPro" id="IPR032821">
    <property type="entry name" value="PKS_assoc"/>
</dbReference>
<dbReference type="InterPro" id="IPR020841">
    <property type="entry name" value="PKS_Beta-ketoAc_synthase_dom"/>
</dbReference>
<dbReference type="InterPro" id="IPR042104">
    <property type="entry name" value="PKS_dehydratase_sf"/>
</dbReference>
<dbReference type="InterPro" id="IPR020807">
    <property type="entry name" value="PKS_DH"/>
</dbReference>
<dbReference type="InterPro" id="IPR049551">
    <property type="entry name" value="PKS_DH_C"/>
</dbReference>
<dbReference type="InterPro" id="IPR049552">
    <property type="entry name" value="PKS_DH_N"/>
</dbReference>
<dbReference type="InterPro" id="IPR020843">
    <property type="entry name" value="PKS_ER"/>
</dbReference>
<dbReference type="InterPro" id="IPR013968">
    <property type="entry name" value="PKS_KR"/>
</dbReference>
<dbReference type="InterPro" id="IPR049900">
    <property type="entry name" value="PKS_mFAS_DH"/>
</dbReference>
<dbReference type="InterPro" id="IPR050091">
    <property type="entry name" value="PKS_NRPS_Biosynth_Enz"/>
</dbReference>
<dbReference type="InterPro" id="IPR020806">
    <property type="entry name" value="PKS_PP-bd"/>
</dbReference>
<dbReference type="InterPro" id="IPR009081">
    <property type="entry name" value="PP-bd_ACP"/>
</dbReference>
<dbReference type="InterPro" id="IPR029063">
    <property type="entry name" value="SAM-dependent_MTases_sf"/>
</dbReference>
<dbReference type="InterPro" id="IPR016039">
    <property type="entry name" value="Thiolase-like"/>
</dbReference>
<dbReference type="PANTHER" id="PTHR43775:SF29">
    <property type="entry name" value="ASPERFURANONE POLYKETIDE SYNTHASE AFOG-RELATED"/>
    <property type="match status" value="1"/>
</dbReference>
<dbReference type="PANTHER" id="PTHR43775">
    <property type="entry name" value="FATTY ACID SYNTHASE"/>
    <property type="match status" value="1"/>
</dbReference>
<dbReference type="Pfam" id="PF23297">
    <property type="entry name" value="ACP_SdgA_C"/>
    <property type="match status" value="1"/>
</dbReference>
<dbReference type="Pfam" id="PF00698">
    <property type="entry name" value="Acyl_transf_1"/>
    <property type="match status" value="1"/>
</dbReference>
<dbReference type="Pfam" id="PF08240">
    <property type="entry name" value="ADH_N"/>
    <property type="match status" value="1"/>
</dbReference>
<dbReference type="Pfam" id="PF13602">
    <property type="entry name" value="ADH_zinc_N_2"/>
    <property type="match status" value="1"/>
</dbReference>
<dbReference type="Pfam" id="PF16197">
    <property type="entry name" value="KAsynt_C_assoc"/>
    <property type="match status" value="1"/>
</dbReference>
<dbReference type="Pfam" id="PF00109">
    <property type="entry name" value="ketoacyl-synt"/>
    <property type="match status" value="1"/>
</dbReference>
<dbReference type="Pfam" id="PF02801">
    <property type="entry name" value="Ketoacyl-synt_C"/>
    <property type="match status" value="1"/>
</dbReference>
<dbReference type="Pfam" id="PF08659">
    <property type="entry name" value="KR"/>
    <property type="match status" value="1"/>
</dbReference>
<dbReference type="Pfam" id="PF23114">
    <property type="entry name" value="NAD-bd_HRPKS_sdrA"/>
    <property type="match status" value="1"/>
</dbReference>
<dbReference type="Pfam" id="PF21089">
    <property type="entry name" value="PKS_DH_N"/>
    <property type="match status" value="1"/>
</dbReference>
<dbReference type="Pfam" id="PF14765">
    <property type="entry name" value="PS-DH"/>
    <property type="match status" value="1"/>
</dbReference>
<dbReference type="SMART" id="SM00827">
    <property type="entry name" value="PKS_AT"/>
    <property type="match status" value="1"/>
</dbReference>
<dbReference type="SMART" id="SM00826">
    <property type="entry name" value="PKS_DH"/>
    <property type="match status" value="1"/>
</dbReference>
<dbReference type="SMART" id="SM00829">
    <property type="entry name" value="PKS_ER"/>
    <property type="match status" value="1"/>
</dbReference>
<dbReference type="SMART" id="SM00822">
    <property type="entry name" value="PKS_KR"/>
    <property type="match status" value="1"/>
</dbReference>
<dbReference type="SMART" id="SM00825">
    <property type="entry name" value="PKS_KS"/>
    <property type="match status" value="1"/>
</dbReference>
<dbReference type="SMART" id="SM00823">
    <property type="entry name" value="PKS_PP"/>
    <property type="match status" value="1"/>
</dbReference>
<dbReference type="SUPFAM" id="SSF47336">
    <property type="entry name" value="ACP-like"/>
    <property type="match status" value="1"/>
</dbReference>
<dbReference type="SUPFAM" id="SSF52151">
    <property type="entry name" value="FabD/lysophospholipase-like"/>
    <property type="match status" value="1"/>
</dbReference>
<dbReference type="SUPFAM" id="SSF50129">
    <property type="entry name" value="GroES-like"/>
    <property type="match status" value="1"/>
</dbReference>
<dbReference type="SUPFAM" id="SSF51735">
    <property type="entry name" value="NAD(P)-binding Rossmann-fold domains"/>
    <property type="match status" value="2"/>
</dbReference>
<dbReference type="SUPFAM" id="SSF55048">
    <property type="entry name" value="Probable ACP-binding domain of malonyl-CoA ACP transacylase"/>
    <property type="match status" value="1"/>
</dbReference>
<dbReference type="SUPFAM" id="SSF53335">
    <property type="entry name" value="S-adenosyl-L-methionine-dependent methyltransferases"/>
    <property type="match status" value="1"/>
</dbReference>
<dbReference type="SUPFAM" id="SSF53901">
    <property type="entry name" value="Thiolase-like"/>
    <property type="match status" value="1"/>
</dbReference>
<dbReference type="PROSITE" id="PS50075">
    <property type="entry name" value="CARRIER"/>
    <property type="match status" value="1"/>
</dbReference>
<dbReference type="PROSITE" id="PS52004">
    <property type="entry name" value="KS3_2"/>
    <property type="match status" value="1"/>
</dbReference>
<dbReference type="PROSITE" id="PS52019">
    <property type="entry name" value="PKS_MFAS_DH"/>
    <property type="match status" value="1"/>
</dbReference>
<name>TPEA_TALSN</name>
<feature type="chain" id="PRO_0000457626" description="Partially reducing polyketide synthase tpeA">
    <location>
        <begin position="1"/>
        <end position="2521"/>
    </location>
</feature>
<feature type="domain" description="Ketosynthase family 3 (KS3)" evidence="3 8">
    <location>
        <begin position="7"/>
        <end position="434"/>
    </location>
</feature>
<feature type="domain" description="Malonyl-CoA:ACP transacylase (MAT)" evidence="1 8">
    <location>
        <begin position="554"/>
        <end position="855"/>
    </location>
</feature>
<feature type="domain" description="PKS/mFAS DH" evidence="4">
    <location>
        <begin position="948"/>
        <end position="1258"/>
    </location>
</feature>
<feature type="domain" description="Enoyl reductase (ER)" evidence="1 8">
    <location>
        <begin position="1809"/>
        <end position="2121"/>
    </location>
</feature>
<feature type="domain" description="Ketoreductase (KR)" evidence="1 8">
    <location>
        <begin position="2146"/>
        <end position="2323"/>
    </location>
</feature>
<feature type="domain" description="Carrier" evidence="2 8">
    <location>
        <begin position="2433"/>
        <end position="2510"/>
    </location>
</feature>
<feature type="region of interest" description="Disordered" evidence="5">
    <location>
        <begin position="47"/>
        <end position="66"/>
    </location>
</feature>
<feature type="region of interest" description="N-terminal hotdog fold" evidence="4">
    <location>
        <begin position="948"/>
        <end position="1088"/>
    </location>
</feature>
<feature type="region of interest" description="Dehydratase (DH) domain" evidence="1 8">
    <location>
        <begin position="949"/>
        <end position="1256"/>
    </location>
</feature>
<feature type="region of interest" description="C-terminal hotdog fold" evidence="4">
    <location>
        <begin position="1100"/>
        <end position="1258"/>
    </location>
</feature>
<feature type="active site" description="For beta-ketoacyl synthase activity" evidence="3">
    <location>
        <position position="180"/>
    </location>
</feature>
<feature type="active site" description="For beta-ketoacyl synthase activity" evidence="3">
    <location>
        <position position="315"/>
    </location>
</feature>
<feature type="active site" description="For beta-ketoacyl synthase activity" evidence="3">
    <location>
        <position position="357"/>
    </location>
</feature>
<feature type="modified residue" description="O-(pantetheine 4'-phosphoryl)serine" evidence="2">
    <location>
        <position position="2470"/>
    </location>
</feature>